<reference key="1">
    <citation type="journal article" date="2008" name="PLoS ONE">
        <title>Comparative analysis of Acinetobacters: three genomes for three lifestyles.</title>
        <authorList>
            <person name="Vallenet D."/>
            <person name="Nordmann P."/>
            <person name="Barbe V."/>
            <person name="Poirel L."/>
            <person name="Mangenot S."/>
            <person name="Bataille E."/>
            <person name="Dossat C."/>
            <person name="Gas S."/>
            <person name="Kreimeyer A."/>
            <person name="Lenoble P."/>
            <person name="Oztas S."/>
            <person name="Poulain J."/>
            <person name="Segurens B."/>
            <person name="Robert C."/>
            <person name="Abergel C."/>
            <person name="Claverie J.-M."/>
            <person name="Raoult D."/>
            <person name="Medigue C."/>
            <person name="Weissenbach J."/>
            <person name="Cruveiller S."/>
        </authorList>
    </citation>
    <scope>NUCLEOTIDE SEQUENCE [LARGE SCALE GENOMIC DNA]</scope>
    <source>
        <strain>AYE</strain>
    </source>
</reference>
<comment type="function">
    <text evidence="1">Catalyzes the NADPH-dependent reduction of L-glutamate 5-phosphate into L-glutamate 5-semialdehyde and phosphate. The product spontaneously undergoes cyclization to form 1-pyrroline-5-carboxylate.</text>
</comment>
<comment type="catalytic activity">
    <reaction evidence="1">
        <text>L-glutamate 5-semialdehyde + phosphate + NADP(+) = L-glutamyl 5-phosphate + NADPH + H(+)</text>
        <dbReference type="Rhea" id="RHEA:19541"/>
        <dbReference type="ChEBI" id="CHEBI:15378"/>
        <dbReference type="ChEBI" id="CHEBI:43474"/>
        <dbReference type="ChEBI" id="CHEBI:57783"/>
        <dbReference type="ChEBI" id="CHEBI:58066"/>
        <dbReference type="ChEBI" id="CHEBI:58274"/>
        <dbReference type="ChEBI" id="CHEBI:58349"/>
        <dbReference type="EC" id="1.2.1.41"/>
    </reaction>
</comment>
<comment type="pathway">
    <text evidence="1">Amino-acid biosynthesis; L-proline biosynthesis; L-glutamate 5-semialdehyde from L-glutamate: step 2/2.</text>
</comment>
<comment type="subcellular location">
    <subcellularLocation>
        <location evidence="1">Cytoplasm</location>
    </subcellularLocation>
</comment>
<comment type="similarity">
    <text evidence="1">Belongs to the gamma-glutamyl phosphate reductase family.</text>
</comment>
<sequence>MQDSIEQYMQKVGQQARDASRVLTSASTSLKNHALSAIYTALENNQAAILAANQIDMEKGRSNQLDSALLDRLELTPARFKGMLQGLKDVIALVDPIGEITDLAYRPTGIQIGKMRVPLGVVGMIYESRPNVTLEAASLAIKSGNAIILRGGSEALESNKAIAEAVKHGLKVAGLPEHSVQVIETSDRAAVGHLITMAEYVDVIVPRGGKSLIERVTNEARIPVIKHLDGNCHVFVEAQADLQKALPITLNAKTHRYGVCNAMETLLVDEKIAEVFLPHIAELYAEKQVELRGCPETRRILGSSVKPATEEDWYTEYLGPILAVKVVSGIDEAIDHINKYGSHHTDAIVTENYTLARQFLARVDSSSVVVNASTRFADGFEYGLGAEIGISTDKIHARGPVGLEGLTSQKWIVLGDGQIRQ</sequence>
<gene>
    <name evidence="1" type="primary">proA</name>
    <name type="ordered locus">ABAYE3276</name>
</gene>
<evidence type="ECO:0000255" key="1">
    <source>
        <dbReference type="HAMAP-Rule" id="MF_00412"/>
    </source>
</evidence>
<protein>
    <recommendedName>
        <fullName evidence="1">Gamma-glutamyl phosphate reductase</fullName>
        <shortName evidence="1">GPR</shortName>
        <ecNumber evidence="1">1.2.1.41</ecNumber>
    </recommendedName>
    <alternativeName>
        <fullName evidence="1">Glutamate-5-semialdehyde dehydrogenase</fullName>
    </alternativeName>
    <alternativeName>
        <fullName evidence="1">Glutamyl-gamma-semialdehyde dehydrogenase</fullName>
        <shortName evidence="1">GSA dehydrogenase</shortName>
    </alternativeName>
</protein>
<organism>
    <name type="scientific">Acinetobacter baumannii (strain AYE)</name>
    <dbReference type="NCBI Taxonomy" id="509173"/>
    <lineage>
        <taxon>Bacteria</taxon>
        <taxon>Pseudomonadati</taxon>
        <taxon>Pseudomonadota</taxon>
        <taxon>Gammaproteobacteria</taxon>
        <taxon>Moraxellales</taxon>
        <taxon>Moraxellaceae</taxon>
        <taxon>Acinetobacter</taxon>
        <taxon>Acinetobacter calcoaceticus/baumannii complex</taxon>
    </lineage>
</organism>
<name>PROA_ACIBY</name>
<keyword id="KW-0028">Amino-acid biosynthesis</keyword>
<keyword id="KW-0963">Cytoplasm</keyword>
<keyword id="KW-0521">NADP</keyword>
<keyword id="KW-0560">Oxidoreductase</keyword>
<keyword id="KW-0641">Proline biosynthesis</keyword>
<proteinExistence type="inferred from homology"/>
<feature type="chain" id="PRO_1000123770" description="Gamma-glutamyl phosphate reductase">
    <location>
        <begin position="1"/>
        <end position="421"/>
    </location>
</feature>
<accession>B0V4S6</accession>
<dbReference type="EC" id="1.2.1.41" evidence="1"/>
<dbReference type="EMBL" id="CU459141">
    <property type="protein sequence ID" value="CAM88076.1"/>
    <property type="molecule type" value="Genomic_DNA"/>
</dbReference>
<dbReference type="RefSeq" id="WP_001154158.1">
    <property type="nucleotide sequence ID" value="NZ_JBDGFB010000008.1"/>
</dbReference>
<dbReference type="SMR" id="B0V4S6"/>
<dbReference type="EnsemblBacteria" id="CAM88076">
    <property type="protein sequence ID" value="CAM88076"/>
    <property type="gene ID" value="ABAYE3276"/>
</dbReference>
<dbReference type="KEGG" id="aby:ABAYE3276"/>
<dbReference type="HOGENOM" id="CLU_030231_0_0_6"/>
<dbReference type="UniPathway" id="UPA00098">
    <property type="reaction ID" value="UER00360"/>
</dbReference>
<dbReference type="GO" id="GO:0005737">
    <property type="term" value="C:cytoplasm"/>
    <property type="evidence" value="ECO:0007669"/>
    <property type="project" value="UniProtKB-SubCell"/>
</dbReference>
<dbReference type="GO" id="GO:0004350">
    <property type="term" value="F:glutamate-5-semialdehyde dehydrogenase activity"/>
    <property type="evidence" value="ECO:0007669"/>
    <property type="project" value="UniProtKB-UniRule"/>
</dbReference>
<dbReference type="GO" id="GO:0050661">
    <property type="term" value="F:NADP binding"/>
    <property type="evidence" value="ECO:0007669"/>
    <property type="project" value="InterPro"/>
</dbReference>
<dbReference type="GO" id="GO:0055129">
    <property type="term" value="P:L-proline biosynthetic process"/>
    <property type="evidence" value="ECO:0007669"/>
    <property type="project" value="UniProtKB-UniRule"/>
</dbReference>
<dbReference type="CDD" id="cd07079">
    <property type="entry name" value="ALDH_F18-19_ProA-GPR"/>
    <property type="match status" value="1"/>
</dbReference>
<dbReference type="FunFam" id="3.40.309.10:FF:000006">
    <property type="entry name" value="Gamma-glutamyl phosphate reductase"/>
    <property type="match status" value="1"/>
</dbReference>
<dbReference type="Gene3D" id="3.40.605.10">
    <property type="entry name" value="Aldehyde Dehydrogenase, Chain A, domain 1"/>
    <property type="match status" value="1"/>
</dbReference>
<dbReference type="Gene3D" id="3.40.309.10">
    <property type="entry name" value="Aldehyde Dehydrogenase, Chain A, domain 2"/>
    <property type="match status" value="1"/>
</dbReference>
<dbReference type="HAMAP" id="MF_00412">
    <property type="entry name" value="ProA"/>
    <property type="match status" value="1"/>
</dbReference>
<dbReference type="InterPro" id="IPR016161">
    <property type="entry name" value="Ald_DH/histidinol_DH"/>
</dbReference>
<dbReference type="InterPro" id="IPR016163">
    <property type="entry name" value="Ald_DH_C"/>
</dbReference>
<dbReference type="InterPro" id="IPR016162">
    <property type="entry name" value="Ald_DH_N"/>
</dbReference>
<dbReference type="InterPro" id="IPR015590">
    <property type="entry name" value="Aldehyde_DH_dom"/>
</dbReference>
<dbReference type="InterPro" id="IPR020593">
    <property type="entry name" value="G-glutamylP_reductase_CS"/>
</dbReference>
<dbReference type="InterPro" id="IPR012134">
    <property type="entry name" value="Glu-5-SA_DH"/>
</dbReference>
<dbReference type="InterPro" id="IPR000965">
    <property type="entry name" value="GPR_dom"/>
</dbReference>
<dbReference type="NCBIfam" id="NF001221">
    <property type="entry name" value="PRK00197.1"/>
    <property type="match status" value="1"/>
</dbReference>
<dbReference type="NCBIfam" id="TIGR00407">
    <property type="entry name" value="proA"/>
    <property type="match status" value="1"/>
</dbReference>
<dbReference type="PANTHER" id="PTHR11063:SF8">
    <property type="entry name" value="DELTA-1-PYRROLINE-5-CARBOXYLATE SYNTHASE"/>
    <property type="match status" value="1"/>
</dbReference>
<dbReference type="PANTHER" id="PTHR11063">
    <property type="entry name" value="GLUTAMATE SEMIALDEHYDE DEHYDROGENASE"/>
    <property type="match status" value="1"/>
</dbReference>
<dbReference type="Pfam" id="PF00171">
    <property type="entry name" value="Aldedh"/>
    <property type="match status" value="2"/>
</dbReference>
<dbReference type="PIRSF" id="PIRSF000151">
    <property type="entry name" value="GPR"/>
    <property type="match status" value="1"/>
</dbReference>
<dbReference type="SUPFAM" id="SSF53720">
    <property type="entry name" value="ALDH-like"/>
    <property type="match status" value="1"/>
</dbReference>
<dbReference type="PROSITE" id="PS01223">
    <property type="entry name" value="PROA"/>
    <property type="match status" value="1"/>
</dbReference>